<comment type="function">
    <text evidence="1">Transports viral genome to neighboring plant cells directly through plasmosdesmata, without any budding. The movement protein allows efficient cell to cell propagation, by bypassing the host cell wall barrier. Acts by forming tubules structures that increase the size exclusion limit (SEL) of plasmodesmata, thereby allowing viral ribonucleocapsids to spread directly to neighboring cells (By similarity).</text>
</comment>
<comment type="subunit">
    <text evidence="1">Homotrimer, through the coiled-coil domain. Interacts with VAP. May interact (via N-terminus) with host prenylated Rab acceptor protein 1D (PRA1D).</text>
</comment>
<comment type="subcellular location">
    <subcellularLocation>
        <location>Host cell junction</location>
        <location>Host plasmodesma</location>
    </subcellularLocation>
    <text>Assembles in tubules that are embedded within modified plasmodesmata.</text>
</comment>
<comment type="similarity">
    <text evidence="2">Belongs to the caulimoviridae movement protein family.</text>
</comment>
<reference key="1">
    <citation type="journal article" date="1982" name="Gene">
        <title>Nucleotide sequence of DNA from an altered-virulence isolate D/H of the cauliflower mosaic virus.</title>
        <authorList>
            <person name="Balazs E."/>
            <person name="Guilley H."/>
            <person name="Jonard G."/>
            <person name="Richards K."/>
        </authorList>
    </citation>
    <scope>NUCLEOTIDE SEQUENCE [GENOMIC DNA]</scope>
</reference>
<organism>
    <name type="scientific">Cauliflower mosaic virus (strain D/H)</name>
    <name type="common">CaMV</name>
    <dbReference type="NCBI Taxonomy" id="10645"/>
    <lineage>
        <taxon>Viruses</taxon>
        <taxon>Riboviria</taxon>
        <taxon>Pararnavirae</taxon>
        <taxon>Artverviricota</taxon>
        <taxon>Revtraviricetes</taxon>
        <taxon>Ortervirales</taxon>
        <taxon>Caulimoviridae</taxon>
        <taxon>Caulimovirus</taxon>
        <taxon>Caulimovirus tessellobrassicae</taxon>
    </lineage>
</organism>
<gene>
    <name type="ORF">ORF I</name>
</gene>
<dbReference type="EMBL" id="M10376">
    <property type="protein sequence ID" value="AAA46345.1"/>
    <property type="molecule type" value="Genomic_DNA"/>
</dbReference>
<dbReference type="Proteomes" id="UP000008439">
    <property type="component" value="Genome"/>
</dbReference>
<dbReference type="GO" id="GO:0044219">
    <property type="term" value="C:host cell plasmodesma"/>
    <property type="evidence" value="ECO:0007669"/>
    <property type="project" value="UniProtKB-SubCell"/>
</dbReference>
<dbReference type="GO" id="GO:0046740">
    <property type="term" value="P:transport of virus in host, cell to cell"/>
    <property type="evidence" value="ECO:0007669"/>
    <property type="project" value="UniProtKB-KW"/>
</dbReference>
<dbReference type="InterPro" id="IPR051596">
    <property type="entry name" value="Caulimoviridae_Movement"/>
</dbReference>
<dbReference type="InterPro" id="IPR028919">
    <property type="entry name" value="Viral_movement"/>
</dbReference>
<dbReference type="PANTHER" id="PTHR47599">
    <property type="entry name" value="CELL-TO-CELL MOVEMENT PROTEIN"/>
    <property type="match status" value="1"/>
</dbReference>
<dbReference type="PANTHER" id="PTHR47599:SF3">
    <property type="entry name" value="CELL-TO-CELL MOVEMENT PROTEIN"/>
    <property type="match status" value="1"/>
</dbReference>
<dbReference type="Pfam" id="PF01107">
    <property type="entry name" value="MP"/>
    <property type="match status" value="1"/>
</dbReference>
<proteinExistence type="inferred from homology"/>
<sequence>MDLYPEENTQSEQSQNSENNMQIFKSETSDGFSSDLKISNDQLKNISKTQLTLEKEKIFKMPNVLSQVMKKAFSRKNEILYCVSTKELSVDIHDATGKVYLPLITKEEINKRLSSLKPEVRRTMSMVHLGAVKILLKAQFRNGIDTPIKIALIDDRINSRRDCLLGAAKGNLAYGKFMFTVYPKFGISLNTQRLNQTLSLIHDFENKNLMNKGDKVMTITYIVGYALTNSHHSIDYQSNATIELEDVFQEIGNIQQSEFCTIQNDECNWAIDIAQNKALLGAKTKTQIGNSLQIGNIASSSSTENELARVSQNIDLLKNKLKEICGE</sequence>
<name>MVP_CAMVD</name>
<protein>
    <recommendedName>
        <fullName>Movement protein</fullName>
        <shortName>Mov</shortName>
    </recommendedName>
    <alternativeName>
        <fullName>Cell-to-cell transport protein</fullName>
    </alternativeName>
</protein>
<evidence type="ECO:0000250" key="1"/>
<evidence type="ECO:0000305" key="2"/>
<keyword id="KW-0175">Coiled coil</keyword>
<keyword id="KW-1031">Host cell junction</keyword>
<keyword id="KW-0945">Host-virus interaction</keyword>
<keyword id="KW-0813">Transport</keyword>
<keyword id="KW-0916">Viral movement protein</keyword>
<organismHost>
    <name type="scientific">Arabidopsis thaliana</name>
    <name type="common">Mouse-ear cress</name>
    <dbReference type="NCBI Taxonomy" id="3702"/>
</organismHost>
<organismHost>
    <name type="scientific">Brassica</name>
    <dbReference type="NCBI Taxonomy" id="3705"/>
</organismHost>
<organismHost>
    <name type="scientific">Raphanus</name>
    <dbReference type="NCBI Taxonomy" id="3725"/>
</organismHost>
<feature type="chain" id="PRO_0000222059" description="Movement protein">
    <location>
        <begin position="1"/>
        <end position="327"/>
    </location>
</feature>
<feature type="coiled-coil region" evidence="1">
    <location>
        <begin position="297"/>
        <end position="327"/>
    </location>
</feature>
<accession>P03547</accession>